<gene>
    <name type="primary">sdha</name>
    <name type="ORF">si:dkeyp-84f11.2</name>
</gene>
<sequence length="661" mass="72078">MAAVCAASRVLGTKILSCKSLPAVCQANRQLHFSIYGKRGDAKISDGVSNQYPVVDHEFDAVVVGAGGAGLRAAFGLSEAGFNTACVTKLFPTRSHTVAAQGGINAALGNMEQDDWRWHFYDTVKGSDWLGDQDAIHYMTEQAPAAVVELENFGMPFSRTDDGKIYQRAFGGQSLKFGKGGQAHRCCCVADRTGHSLLHTLYGRSLRYDTSYFVEYFALDLLMEDGECKGVIALCMEDGSIHRFRAKNTVIATGGYGRTFFSCTSAHTSTGDGNAMVTRAGLPCQDLEFVQFHPTGIYGAGCLITEGCRGEGGILINSEGERFMERYAPNAKDLASRDVVSRSMTIEIREGRGVGPDKDHVHLQLHHLPPQQLAARLPGISETAMIFAGVDVTKEPIPVLPTVHYNMGGIPTNYKGQVITYKDGQDHVVPGLYACGEAGCASVHGANRLGANSLLDLVVFGRACALTIAEIDTPGEKLSPLKPNAGEASVANLDKMRYANGSTRTSEIRLNMQKTMQSHAAVFRTGDVLKEGCVKMESVYKSMDDIKTFDRGIVWNTDLVETLELQNLMLNAVQTIVSAEARKESRGAHAREDFKDRVDEYDYSKPLQGQVKKPFEQHWRKHTLSYVDPETGKVTLEYRPVIDSSLDAEDCAAIPPAIRSY</sequence>
<reference key="1">
    <citation type="journal article" date="2013" name="Nature">
        <title>The zebrafish reference genome sequence and its relationship to the human genome.</title>
        <authorList>
            <person name="Howe K."/>
            <person name="Clark M.D."/>
            <person name="Torroja C.F."/>
            <person name="Torrance J."/>
            <person name="Berthelot C."/>
            <person name="Muffato M."/>
            <person name="Collins J.E."/>
            <person name="Humphray S."/>
            <person name="McLaren K."/>
            <person name="Matthews L."/>
            <person name="McLaren S."/>
            <person name="Sealy I."/>
            <person name="Caccamo M."/>
            <person name="Churcher C."/>
            <person name="Scott C."/>
            <person name="Barrett J.C."/>
            <person name="Koch R."/>
            <person name="Rauch G.J."/>
            <person name="White S."/>
            <person name="Chow W."/>
            <person name="Kilian B."/>
            <person name="Quintais L.T."/>
            <person name="Guerra-Assuncao J.A."/>
            <person name="Zhou Y."/>
            <person name="Gu Y."/>
            <person name="Yen J."/>
            <person name="Vogel J.H."/>
            <person name="Eyre T."/>
            <person name="Redmond S."/>
            <person name="Banerjee R."/>
            <person name="Chi J."/>
            <person name="Fu B."/>
            <person name="Langley E."/>
            <person name="Maguire S.F."/>
            <person name="Laird G.K."/>
            <person name="Lloyd D."/>
            <person name="Kenyon E."/>
            <person name="Donaldson S."/>
            <person name="Sehra H."/>
            <person name="Almeida-King J."/>
            <person name="Loveland J."/>
            <person name="Trevanion S."/>
            <person name="Jones M."/>
            <person name="Quail M."/>
            <person name="Willey D."/>
            <person name="Hunt A."/>
            <person name="Burton J."/>
            <person name="Sims S."/>
            <person name="McLay K."/>
            <person name="Plumb B."/>
            <person name="Davis J."/>
            <person name="Clee C."/>
            <person name="Oliver K."/>
            <person name="Clark R."/>
            <person name="Riddle C."/>
            <person name="Elliot D."/>
            <person name="Threadgold G."/>
            <person name="Harden G."/>
            <person name="Ware D."/>
            <person name="Begum S."/>
            <person name="Mortimore B."/>
            <person name="Kerry G."/>
            <person name="Heath P."/>
            <person name="Phillimore B."/>
            <person name="Tracey A."/>
            <person name="Corby N."/>
            <person name="Dunn M."/>
            <person name="Johnson C."/>
            <person name="Wood J."/>
            <person name="Clark S."/>
            <person name="Pelan S."/>
            <person name="Griffiths G."/>
            <person name="Smith M."/>
            <person name="Glithero R."/>
            <person name="Howden P."/>
            <person name="Barker N."/>
            <person name="Lloyd C."/>
            <person name="Stevens C."/>
            <person name="Harley J."/>
            <person name="Holt K."/>
            <person name="Panagiotidis G."/>
            <person name="Lovell J."/>
            <person name="Beasley H."/>
            <person name="Henderson C."/>
            <person name="Gordon D."/>
            <person name="Auger K."/>
            <person name="Wright D."/>
            <person name="Collins J."/>
            <person name="Raisen C."/>
            <person name="Dyer L."/>
            <person name="Leung K."/>
            <person name="Robertson L."/>
            <person name="Ambridge K."/>
            <person name="Leongamornlert D."/>
            <person name="McGuire S."/>
            <person name="Gilderthorp R."/>
            <person name="Griffiths C."/>
            <person name="Manthravadi D."/>
            <person name="Nichol S."/>
            <person name="Barker G."/>
            <person name="Whitehead S."/>
            <person name="Kay M."/>
            <person name="Brown J."/>
            <person name="Murnane C."/>
            <person name="Gray E."/>
            <person name="Humphries M."/>
            <person name="Sycamore N."/>
            <person name="Barker D."/>
            <person name="Saunders D."/>
            <person name="Wallis J."/>
            <person name="Babbage A."/>
            <person name="Hammond S."/>
            <person name="Mashreghi-Mohammadi M."/>
            <person name="Barr L."/>
            <person name="Martin S."/>
            <person name="Wray P."/>
            <person name="Ellington A."/>
            <person name="Matthews N."/>
            <person name="Ellwood M."/>
            <person name="Woodmansey R."/>
            <person name="Clark G."/>
            <person name="Cooper J."/>
            <person name="Tromans A."/>
            <person name="Grafham D."/>
            <person name="Skuce C."/>
            <person name="Pandian R."/>
            <person name="Andrews R."/>
            <person name="Harrison E."/>
            <person name="Kimberley A."/>
            <person name="Garnett J."/>
            <person name="Fosker N."/>
            <person name="Hall R."/>
            <person name="Garner P."/>
            <person name="Kelly D."/>
            <person name="Bird C."/>
            <person name="Palmer S."/>
            <person name="Gehring I."/>
            <person name="Berger A."/>
            <person name="Dooley C.M."/>
            <person name="Ersan-Urun Z."/>
            <person name="Eser C."/>
            <person name="Geiger H."/>
            <person name="Geisler M."/>
            <person name="Karotki L."/>
            <person name="Kirn A."/>
            <person name="Konantz J."/>
            <person name="Konantz M."/>
            <person name="Oberlander M."/>
            <person name="Rudolph-Geiger S."/>
            <person name="Teucke M."/>
            <person name="Lanz C."/>
            <person name="Raddatz G."/>
            <person name="Osoegawa K."/>
            <person name="Zhu B."/>
            <person name="Rapp A."/>
            <person name="Widaa S."/>
            <person name="Langford C."/>
            <person name="Yang F."/>
            <person name="Schuster S.C."/>
            <person name="Carter N.P."/>
            <person name="Harrow J."/>
            <person name="Ning Z."/>
            <person name="Herrero J."/>
            <person name="Searle S.M."/>
            <person name="Enright A."/>
            <person name="Geisler R."/>
            <person name="Plasterk R.H."/>
            <person name="Lee C."/>
            <person name="Westerfield M."/>
            <person name="de Jong P.J."/>
            <person name="Zon L.I."/>
            <person name="Postlethwait J.H."/>
            <person name="Nusslein-Volhard C."/>
            <person name="Hubbard T.J."/>
            <person name="Roest Crollius H."/>
            <person name="Rogers J."/>
            <person name="Stemple D.L."/>
        </authorList>
    </citation>
    <scope>NUCLEOTIDE SEQUENCE [LARGE SCALE GENOMIC DNA]</scope>
    <source>
        <strain>Tuebingen</strain>
    </source>
</reference>
<reference key="2">
    <citation type="submission" date="2003-01" db="EMBL/GenBank/DDBJ databases">
        <authorList>
            <consortium name="NIH - Zebrafish Gene Collection (ZGC) project"/>
        </authorList>
    </citation>
    <scope>NUCLEOTIDE SEQUENCE [LARGE SCALE MRNA]</scope>
    <source>
        <strain>AB</strain>
    </source>
</reference>
<accession>Q7ZVF3</accession>
<accession>Q1LV99</accession>
<name>SDHA_DANRE</name>
<organism>
    <name type="scientific">Danio rerio</name>
    <name type="common">Zebrafish</name>
    <name type="synonym">Brachydanio rerio</name>
    <dbReference type="NCBI Taxonomy" id="7955"/>
    <lineage>
        <taxon>Eukaryota</taxon>
        <taxon>Metazoa</taxon>
        <taxon>Chordata</taxon>
        <taxon>Craniata</taxon>
        <taxon>Vertebrata</taxon>
        <taxon>Euteleostomi</taxon>
        <taxon>Actinopterygii</taxon>
        <taxon>Neopterygii</taxon>
        <taxon>Teleostei</taxon>
        <taxon>Ostariophysi</taxon>
        <taxon>Cypriniformes</taxon>
        <taxon>Danionidae</taxon>
        <taxon>Danioninae</taxon>
        <taxon>Danio</taxon>
    </lineage>
</organism>
<feature type="transit peptide" description="Mitochondrion" evidence="3">
    <location>
        <begin position="1"/>
        <end position="39"/>
    </location>
</feature>
<feature type="chain" id="PRO_0000344985" description="Succinate dehydrogenase [ubiquinone] flavoprotein subunit, mitochondrial">
    <location>
        <begin position="41"/>
        <end position="661"/>
    </location>
</feature>
<feature type="active site" description="Proton acceptor" evidence="4">
    <location>
        <position position="337"/>
    </location>
</feature>
<feature type="binding site" evidence="2">
    <location>
        <position position="66"/>
    </location>
    <ligand>
        <name>FAD</name>
        <dbReference type="ChEBI" id="CHEBI:57692"/>
    </ligand>
</feature>
<feature type="binding site" evidence="2">
    <location>
        <position position="69"/>
    </location>
    <ligand>
        <name>FAD</name>
        <dbReference type="ChEBI" id="CHEBI:57692"/>
    </ligand>
</feature>
<feature type="binding site" evidence="2">
    <location>
        <position position="88"/>
    </location>
    <ligand>
        <name>FAD</name>
        <dbReference type="ChEBI" id="CHEBI:57692"/>
    </ligand>
</feature>
<feature type="binding site" evidence="2">
    <location>
        <position position="89"/>
    </location>
    <ligand>
        <name>FAD</name>
        <dbReference type="ChEBI" id="CHEBI:57692"/>
    </ligand>
</feature>
<feature type="binding site" evidence="2">
    <location>
        <position position="95"/>
    </location>
    <ligand>
        <name>FAD</name>
        <dbReference type="ChEBI" id="CHEBI:57692"/>
    </ligand>
</feature>
<feature type="binding site" evidence="2">
    <location>
        <position position="97"/>
    </location>
    <ligand>
        <name>FAD</name>
        <dbReference type="ChEBI" id="CHEBI:57692"/>
    </ligand>
</feature>
<feature type="binding site" evidence="2">
    <location>
        <position position="102"/>
    </location>
    <ligand>
        <name>FAD</name>
        <dbReference type="ChEBI" id="CHEBI:57692"/>
    </ligand>
</feature>
<feature type="binding site" evidence="2">
    <location>
        <position position="218"/>
    </location>
    <ligand>
        <name>FAD</name>
        <dbReference type="ChEBI" id="CHEBI:57692"/>
    </ligand>
</feature>
<feature type="binding site" evidence="2">
    <location>
        <position position="272"/>
    </location>
    <ligand>
        <name>FAD</name>
        <dbReference type="ChEBI" id="CHEBI:57692"/>
    </ligand>
</feature>
<feature type="binding site" evidence="2">
    <location>
        <position position="293"/>
    </location>
    <ligand>
        <name>oxaloacetate</name>
        <dbReference type="ChEBI" id="CHEBI:16452"/>
    </ligand>
</feature>
<feature type="binding site" evidence="2">
    <location>
        <position position="337"/>
    </location>
    <ligand>
        <name>oxaloacetate</name>
        <dbReference type="ChEBI" id="CHEBI:16452"/>
    </ligand>
</feature>
<feature type="binding site" evidence="2">
    <location>
        <position position="404"/>
    </location>
    <ligand>
        <name>oxaloacetate</name>
        <dbReference type="ChEBI" id="CHEBI:16452"/>
    </ligand>
</feature>
<feature type="binding site" evidence="2">
    <location>
        <position position="437"/>
    </location>
    <ligand>
        <name>FAD</name>
        <dbReference type="ChEBI" id="CHEBI:57692"/>
    </ligand>
</feature>
<feature type="binding site" evidence="2">
    <location>
        <position position="448"/>
    </location>
    <ligand>
        <name>oxaloacetate</name>
        <dbReference type="ChEBI" id="CHEBI:16452"/>
    </ligand>
</feature>
<feature type="binding site" evidence="2">
    <location>
        <position position="451"/>
    </location>
    <ligand>
        <name>oxaloacetate</name>
        <dbReference type="ChEBI" id="CHEBI:16452"/>
    </ligand>
</feature>
<feature type="binding site" evidence="2">
    <location>
        <position position="453"/>
    </location>
    <ligand>
        <name>FAD</name>
        <dbReference type="ChEBI" id="CHEBI:57692"/>
    </ligand>
</feature>
<feature type="binding site" evidence="2">
    <location>
        <position position="454"/>
    </location>
    <ligand>
        <name>FAD</name>
        <dbReference type="ChEBI" id="CHEBI:57692"/>
    </ligand>
</feature>
<feature type="modified residue" description="Tele-8alpha-FAD histidine" evidence="4">
    <location>
        <position position="96"/>
    </location>
</feature>
<feature type="sequence conflict" description="In Ref. 2; AAH45885." evidence="5" ref="2">
    <original>C</original>
    <variation>S</variation>
    <location>
        <position position="18"/>
    </location>
</feature>
<feature type="sequence conflict" description="In Ref. 2; AAH45885." evidence="5" ref="2">
    <original>D</original>
    <variation>N</variation>
    <location>
        <position position="545"/>
    </location>
</feature>
<protein>
    <recommendedName>
        <fullName>Succinate dehydrogenase [ubiquinone] flavoprotein subunit, mitochondrial</fullName>
        <ecNumber evidence="2">1.3.5.1</ecNumber>
    </recommendedName>
    <alternativeName>
        <fullName>Flavoprotein subunit of complex II</fullName>
        <shortName>Fp</shortName>
    </alternativeName>
    <alternativeName>
        <fullName>Malate dehydrogenase [quinone] flavoprotein subunit</fullName>
        <ecNumber evidence="1">1.1.5.-</ecNumber>
    </alternativeName>
</protein>
<dbReference type="EC" id="1.3.5.1" evidence="2"/>
<dbReference type="EC" id="1.1.5.-" evidence="1"/>
<dbReference type="EMBL" id="BX890617">
    <property type="protein sequence ID" value="CAK11468.1"/>
    <property type="molecule type" value="Genomic_DNA"/>
</dbReference>
<dbReference type="EMBL" id="BC045885">
    <property type="protein sequence ID" value="AAH45885.1"/>
    <property type="molecule type" value="mRNA"/>
</dbReference>
<dbReference type="RefSeq" id="NP_957204.1">
    <property type="nucleotide sequence ID" value="NM_200910.1"/>
</dbReference>
<dbReference type="SMR" id="Q7ZVF3"/>
<dbReference type="FunCoup" id="Q7ZVF3">
    <property type="interactions" value="1646"/>
</dbReference>
<dbReference type="STRING" id="7955.ENSDARP00000018027"/>
<dbReference type="PaxDb" id="7955-ENSDARP00000018027"/>
<dbReference type="Ensembl" id="ENSDART00000015559">
    <property type="protein sequence ID" value="ENSDARP00000018027"/>
    <property type="gene ID" value="ENSDARG00000016721"/>
</dbReference>
<dbReference type="GeneID" id="393884"/>
<dbReference type="KEGG" id="dre:393884"/>
<dbReference type="AGR" id="ZFIN:ZDB-GENE-040426-874"/>
<dbReference type="CTD" id="6389"/>
<dbReference type="ZFIN" id="ZDB-GENE-040426-874">
    <property type="gene designation" value="sdha"/>
</dbReference>
<dbReference type="eggNOG" id="KOG2403">
    <property type="taxonomic scope" value="Eukaryota"/>
</dbReference>
<dbReference type="HOGENOM" id="CLU_014312_6_1_1"/>
<dbReference type="InParanoid" id="Q7ZVF3"/>
<dbReference type="OMA" id="PTGIWRM"/>
<dbReference type="OrthoDB" id="71672at2759"/>
<dbReference type="PhylomeDB" id="Q7ZVF3"/>
<dbReference type="TreeFam" id="TF300763"/>
<dbReference type="Reactome" id="R-DRE-71403">
    <property type="pathway name" value="Citric acid cycle (TCA cycle)"/>
</dbReference>
<dbReference type="Reactome" id="R-DRE-9854311">
    <property type="pathway name" value="Maturation of TCA enzymes and regulation of TCA cycle"/>
</dbReference>
<dbReference type="UniPathway" id="UPA00223">
    <property type="reaction ID" value="UER01006"/>
</dbReference>
<dbReference type="PRO" id="PR:Q7ZVF3"/>
<dbReference type="Proteomes" id="UP000000437">
    <property type="component" value="Chromosome 19"/>
</dbReference>
<dbReference type="Bgee" id="ENSDARG00000016721">
    <property type="expression patterns" value="Expressed in muscle tissue and 43 other cell types or tissues"/>
</dbReference>
<dbReference type="GO" id="GO:0005743">
    <property type="term" value="C:mitochondrial inner membrane"/>
    <property type="evidence" value="ECO:0007669"/>
    <property type="project" value="UniProtKB-SubCell"/>
</dbReference>
<dbReference type="GO" id="GO:0045273">
    <property type="term" value="C:respiratory chain complex II (succinate dehydrogenase)"/>
    <property type="evidence" value="ECO:0000250"/>
    <property type="project" value="UniProtKB"/>
</dbReference>
<dbReference type="GO" id="GO:0009055">
    <property type="term" value="F:electron transfer activity"/>
    <property type="evidence" value="ECO:0000318"/>
    <property type="project" value="GO_Central"/>
</dbReference>
<dbReference type="GO" id="GO:0050660">
    <property type="term" value="F:flavin adenine dinucleotide binding"/>
    <property type="evidence" value="ECO:0000318"/>
    <property type="project" value="GO_Central"/>
</dbReference>
<dbReference type="GO" id="GO:0008177">
    <property type="term" value="F:succinate dehydrogenase (quinone) activity"/>
    <property type="evidence" value="ECO:0000250"/>
    <property type="project" value="UniProtKB"/>
</dbReference>
<dbReference type="GO" id="GO:0006121">
    <property type="term" value="P:mitochondrial electron transport, succinate to ubiquinone"/>
    <property type="evidence" value="ECO:0000318"/>
    <property type="project" value="GO_Central"/>
</dbReference>
<dbReference type="GO" id="GO:0006099">
    <property type="term" value="P:tricarboxylic acid cycle"/>
    <property type="evidence" value="ECO:0007669"/>
    <property type="project" value="UniProtKB-UniPathway"/>
</dbReference>
<dbReference type="FunFam" id="3.90.700.10:FF:000001">
    <property type="entry name" value="Mitochondrial succinate dehydrogenase flavoprotein subunit"/>
    <property type="match status" value="1"/>
</dbReference>
<dbReference type="FunFam" id="4.10.80.40:FF:000004">
    <property type="entry name" value="Succinate dehydrogenase [ubiquinone] flavoprotein subunit, mitochondrial"/>
    <property type="match status" value="1"/>
</dbReference>
<dbReference type="FunFam" id="3.50.50.60:FF:000482">
    <property type="entry name" value="Succinate dehydrogenase complex, subunit A, flavoprotein (Fp)"/>
    <property type="match status" value="1"/>
</dbReference>
<dbReference type="FunFam" id="3.50.50.60:FF:001062">
    <property type="entry name" value="Succinate dehydrogenase complex, subunit A, flavoprotein (Fp)"/>
    <property type="match status" value="1"/>
</dbReference>
<dbReference type="FunFam" id="1.20.58.100:FF:000001">
    <property type="entry name" value="Succinate dehydrogenase flavoprotein subunit (SdhA)"/>
    <property type="match status" value="1"/>
</dbReference>
<dbReference type="Gene3D" id="3.50.50.60">
    <property type="entry name" value="FAD/NAD(P)-binding domain"/>
    <property type="match status" value="1"/>
</dbReference>
<dbReference type="Gene3D" id="1.20.58.100">
    <property type="entry name" value="Fumarate reductase/succinate dehydrogenase flavoprotein-like, C-terminal domain"/>
    <property type="match status" value="1"/>
</dbReference>
<dbReference type="Gene3D" id="4.10.80.40">
    <property type="entry name" value="succinate dehydrogenase protein domain"/>
    <property type="match status" value="1"/>
</dbReference>
<dbReference type="Gene3D" id="3.90.700.10">
    <property type="entry name" value="Succinate dehydrogenase/fumarate reductase flavoprotein, catalytic domain"/>
    <property type="match status" value="1"/>
</dbReference>
<dbReference type="InterPro" id="IPR003953">
    <property type="entry name" value="FAD-dep_OxRdtase_2_FAD-bd"/>
</dbReference>
<dbReference type="InterPro" id="IPR036188">
    <property type="entry name" value="FAD/NAD-bd_sf"/>
</dbReference>
<dbReference type="InterPro" id="IPR003952">
    <property type="entry name" value="FRD_SDH_FAD_BS"/>
</dbReference>
<dbReference type="InterPro" id="IPR037099">
    <property type="entry name" value="Fum_R/Succ_DH_flav-like_C_sf"/>
</dbReference>
<dbReference type="InterPro" id="IPR015939">
    <property type="entry name" value="Fum_Rdtase/Succ_DH_flav-like_C"/>
</dbReference>
<dbReference type="InterPro" id="IPR030664">
    <property type="entry name" value="SdhA/FrdA/AprA"/>
</dbReference>
<dbReference type="InterPro" id="IPR027477">
    <property type="entry name" value="Succ_DH/fumarate_Rdtase_cat_sf"/>
</dbReference>
<dbReference type="InterPro" id="IPR011281">
    <property type="entry name" value="Succ_DH_flav_su_fwd"/>
</dbReference>
<dbReference type="InterPro" id="IPR014006">
    <property type="entry name" value="Succ_Dhase_FrdA_Gneg"/>
</dbReference>
<dbReference type="NCBIfam" id="TIGR01816">
    <property type="entry name" value="sdhA_forward"/>
    <property type="match status" value="1"/>
</dbReference>
<dbReference type="NCBIfam" id="TIGR01812">
    <property type="entry name" value="sdhA_frdA_Gneg"/>
    <property type="match status" value="1"/>
</dbReference>
<dbReference type="PANTHER" id="PTHR11632">
    <property type="entry name" value="SUCCINATE DEHYDROGENASE 2 FLAVOPROTEIN SUBUNIT"/>
    <property type="match status" value="1"/>
</dbReference>
<dbReference type="PANTHER" id="PTHR11632:SF51">
    <property type="entry name" value="SUCCINATE DEHYDROGENASE [UBIQUINONE] FLAVOPROTEIN SUBUNIT, MITOCHONDRIAL"/>
    <property type="match status" value="1"/>
</dbReference>
<dbReference type="Pfam" id="PF00890">
    <property type="entry name" value="FAD_binding_2"/>
    <property type="match status" value="1"/>
</dbReference>
<dbReference type="Pfam" id="PF02910">
    <property type="entry name" value="Succ_DH_flav_C"/>
    <property type="match status" value="1"/>
</dbReference>
<dbReference type="SUPFAM" id="SSF51905">
    <property type="entry name" value="FAD/NAD(P)-binding domain"/>
    <property type="match status" value="1"/>
</dbReference>
<dbReference type="SUPFAM" id="SSF46977">
    <property type="entry name" value="Succinate dehydrogenase/fumarate reductase flavoprotein C-terminal domain"/>
    <property type="match status" value="1"/>
</dbReference>
<dbReference type="SUPFAM" id="SSF56425">
    <property type="entry name" value="Succinate dehydrogenase/fumarate reductase flavoprotein, catalytic domain"/>
    <property type="match status" value="1"/>
</dbReference>
<dbReference type="PROSITE" id="PS00504">
    <property type="entry name" value="FRD_SDH_FAD_BINDING"/>
    <property type="match status" value="1"/>
</dbReference>
<evidence type="ECO:0000250" key="1">
    <source>
        <dbReference type="UniProtKB" id="P31039"/>
    </source>
</evidence>
<evidence type="ECO:0000250" key="2">
    <source>
        <dbReference type="UniProtKB" id="P31040"/>
    </source>
</evidence>
<evidence type="ECO:0000250" key="3">
    <source>
        <dbReference type="UniProtKB" id="Q0QF01"/>
    </source>
</evidence>
<evidence type="ECO:0000250" key="4">
    <source>
        <dbReference type="UniProtKB" id="Q9YHT1"/>
    </source>
</evidence>
<evidence type="ECO:0000305" key="5"/>
<keyword id="KW-0249">Electron transport</keyword>
<keyword id="KW-0274">FAD</keyword>
<keyword id="KW-0285">Flavoprotein</keyword>
<keyword id="KW-0472">Membrane</keyword>
<keyword id="KW-0496">Mitochondrion</keyword>
<keyword id="KW-0999">Mitochondrion inner membrane</keyword>
<keyword id="KW-0560">Oxidoreductase</keyword>
<keyword id="KW-1185">Reference proteome</keyword>
<keyword id="KW-0809">Transit peptide</keyword>
<keyword id="KW-0813">Transport</keyword>
<keyword id="KW-0816">Tricarboxylic acid cycle</keyword>
<comment type="function">
    <text evidence="1 2">Flavoprotein (FP) subunit of succinate dehydrogenase (SDH) that is involved in complex II of the mitochondrial electron transport chain and is responsible for transferring electrons from succinate to ubiquinone (coenzyme Q) (By similarity). SDH also oxidizes malate to the non-canonical enol form of oxaloacetate, enol-oxaloacetate. Enol-oxaloacetate, which is a potent inhibitor of the succinate dehydrogenase activity, is further isomerized into keto-oxaloacetate (By similarity).</text>
</comment>
<comment type="catalytic activity">
    <reaction evidence="2">
        <text>a ubiquinone + succinate = a ubiquinol + fumarate</text>
        <dbReference type="Rhea" id="RHEA:13713"/>
        <dbReference type="Rhea" id="RHEA-COMP:9565"/>
        <dbReference type="Rhea" id="RHEA-COMP:9566"/>
        <dbReference type="ChEBI" id="CHEBI:16389"/>
        <dbReference type="ChEBI" id="CHEBI:17976"/>
        <dbReference type="ChEBI" id="CHEBI:29806"/>
        <dbReference type="ChEBI" id="CHEBI:30031"/>
        <dbReference type="EC" id="1.3.5.1"/>
    </reaction>
</comment>
<comment type="catalytic activity">
    <reaction evidence="1">
        <text>(R)-malate + a quinone = enol-oxaloacetate + a quinol</text>
        <dbReference type="Rhea" id="RHEA:79827"/>
        <dbReference type="ChEBI" id="CHEBI:15588"/>
        <dbReference type="ChEBI" id="CHEBI:17479"/>
        <dbReference type="ChEBI" id="CHEBI:24646"/>
        <dbReference type="ChEBI" id="CHEBI:132124"/>
    </reaction>
    <physiologicalReaction direction="left-to-right" evidence="1">
        <dbReference type="Rhea" id="RHEA:79828"/>
    </physiologicalReaction>
</comment>
<comment type="catalytic activity">
    <reaction evidence="1">
        <text>(S)-malate + a quinone = enol-oxaloacetate + a quinol</text>
        <dbReference type="Rhea" id="RHEA:79831"/>
        <dbReference type="ChEBI" id="CHEBI:15589"/>
        <dbReference type="ChEBI" id="CHEBI:17479"/>
        <dbReference type="ChEBI" id="CHEBI:24646"/>
        <dbReference type="ChEBI" id="CHEBI:132124"/>
    </reaction>
    <physiologicalReaction direction="left-to-right" evidence="1">
        <dbReference type="Rhea" id="RHEA:79832"/>
    </physiologicalReaction>
</comment>
<comment type="cofactor">
    <cofactor evidence="3">
        <name>FAD</name>
        <dbReference type="ChEBI" id="CHEBI:57692"/>
    </cofactor>
</comment>
<comment type="activity regulation">
    <text evidence="1">Enol-oxaloacetate inhibits the succinate dehydrogenase activity.</text>
</comment>
<comment type="pathway">
    <text evidence="2">Carbohydrate metabolism; tricarboxylic acid cycle; fumarate from succinate (eukaryal route): step 1/1.</text>
</comment>
<comment type="subunit">
    <text evidence="3">Component of complex II composed of four subunits: a flavoprotein (FP), an iron-sulfur protein (IP), and a cytochrome b composed of a large and a small subunit.</text>
</comment>
<comment type="subcellular location">
    <subcellularLocation>
        <location evidence="3">Mitochondrion inner membrane</location>
        <topology evidence="3">Peripheral membrane protein</topology>
        <orientation evidence="3">Matrix side</orientation>
    </subcellularLocation>
</comment>
<comment type="similarity">
    <text evidence="5">Belongs to the FAD-dependent oxidoreductase 2 family. FRD/SDH subfamily.</text>
</comment>
<proteinExistence type="evidence at transcript level"/>